<protein>
    <recommendedName>
        <fullName evidence="1">ATP synthase F(0) complex subunit 8</fullName>
    </recommendedName>
    <alternativeName>
        <fullName>A6L</fullName>
    </alternativeName>
    <alternativeName>
        <fullName>F-ATPase subunit 8</fullName>
    </alternativeName>
</protein>
<keyword id="KW-0007">Acetylation</keyword>
<keyword id="KW-0066">ATP synthesis</keyword>
<keyword id="KW-0138">CF(0)</keyword>
<keyword id="KW-0375">Hydrogen ion transport</keyword>
<keyword id="KW-0406">Ion transport</keyword>
<keyword id="KW-0472">Membrane</keyword>
<keyword id="KW-0496">Mitochondrion</keyword>
<keyword id="KW-0812">Transmembrane</keyword>
<keyword id="KW-1133">Transmembrane helix</keyword>
<keyword id="KW-0813">Transport</keyword>
<name>ATP8_CAPII</name>
<geneLocation type="mitochondrion"/>
<reference key="1">
    <citation type="journal article" date="1999" name="J. Anim. Sci.">
        <title>Rapid communication: nucleotide sequence of chamois, alpine ibex, and red deer tRNA(Lys) and ATPase8 mitochondrial genes.</title>
        <authorList>
            <person name="Saulle E."/>
            <person name="Di Pasquale S."/>
            <person name="Tartaglia M."/>
        </authorList>
    </citation>
    <scope>NUCLEOTIDE SEQUENCE [GENOMIC DNA]</scope>
    <source>
        <tissue>Peripheral blood</tissue>
    </source>
</reference>
<feature type="chain" id="PRO_0000195501" description="ATP synthase F(0) complex subunit 8">
    <location>
        <begin position="1"/>
        <end position="65"/>
    </location>
</feature>
<feature type="transmembrane region" description="Helical" evidence="4">
    <location>
        <begin position="8"/>
        <end position="24"/>
    </location>
</feature>
<feature type="modified residue" description="N6-acetyllysine; alternate" evidence="2">
    <location>
        <position position="53"/>
    </location>
</feature>
<feature type="modified residue" description="N6-succinyllysine; alternate" evidence="2">
    <location>
        <position position="53"/>
    </location>
</feature>
<feature type="modified residue" description="N6-acetyllysine" evidence="2">
    <location>
        <position position="56"/>
    </location>
</feature>
<proteinExistence type="inferred from homology"/>
<dbReference type="EMBL" id="AF104682">
    <property type="protein sequence ID" value="AAF43481.1"/>
    <property type="molecule type" value="Genomic_DNA"/>
</dbReference>
<dbReference type="SMR" id="Q9MQK2"/>
<dbReference type="GO" id="GO:0031966">
    <property type="term" value="C:mitochondrial membrane"/>
    <property type="evidence" value="ECO:0007669"/>
    <property type="project" value="UniProtKB-SubCell"/>
</dbReference>
<dbReference type="GO" id="GO:0045259">
    <property type="term" value="C:proton-transporting ATP synthase complex"/>
    <property type="evidence" value="ECO:0000250"/>
    <property type="project" value="UniProtKB"/>
</dbReference>
<dbReference type="GO" id="GO:0015078">
    <property type="term" value="F:proton transmembrane transporter activity"/>
    <property type="evidence" value="ECO:0007669"/>
    <property type="project" value="InterPro"/>
</dbReference>
<dbReference type="GO" id="GO:0015986">
    <property type="term" value="P:proton motive force-driven ATP synthesis"/>
    <property type="evidence" value="ECO:0007669"/>
    <property type="project" value="InterPro"/>
</dbReference>
<dbReference type="InterPro" id="IPR039017">
    <property type="entry name" value="ATP8_mammal"/>
</dbReference>
<dbReference type="InterPro" id="IPR001421">
    <property type="entry name" value="ATP8_metazoa"/>
</dbReference>
<dbReference type="PANTHER" id="PTHR13722">
    <property type="entry name" value="ATP SYNTHASE PROTEIN 8"/>
    <property type="match status" value="1"/>
</dbReference>
<dbReference type="PANTHER" id="PTHR13722:SF0">
    <property type="entry name" value="ATP SYNTHASE PROTEIN 8"/>
    <property type="match status" value="1"/>
</dbReference>
<dbReference type="Pfam" id="PF00895">
    <property type="entry name" value="ATP-synt_8"/>
    <property type="match status" value="1"/>
</dbReference>
<sequence length="65" mass="7761">MPQLDTSTWLTTILSMFLALFIIFQLKISKHNFYHNPELTTKVLKQNTPWETKWTKIYLPLLLPL</sequence>
<organism>
    <name type="scientific">Capra ibex ibex</name>
    <name type="common">Alpine ibex</name>
    <dbReference type="NCBI Taxonomy" id="80420"/>
    <lineage>
        <taxon>Eukaryota</taxon>
        <taxon>Metazoa</taxon>
        <taxon>Chordata</taxon>
        <taxon>Craniata</taxon>
        <taxon>Vertebrata</taxon>
        <taxon>Euteleostomi</taxon>
        <taxon>Mammalia</taxon>
        <taxon>Eutheria</taxon>
        <taxon>Laurasiatheria</taxon>
        <taxon>Artiodactyla</taxon>
        <taxon>Ruminantia</taxon>
        <taxon>Pecora</taxon>
        <taxon>Bovidae</taxon>
        <taxon>Caprinae</taxon>
        <taxon>Capra</taxon>
    </lineage>
</organism>
<comment type="function">
    <text evidence="1 3">Subunit 8, of the mitochondrial membrane ATP synthase complex (F(1)F(0) ATP synthase or Complex V) that produces ATP from ADP in the presence of a proton gradient across the membrane which is generated by electron transport complexes of the respiratory chain. ATP synthase complex consist of a soluble F(1) head domain - the catalytic core - and a membrane F(1) domain - the membrane proton channel. These two domains are linked by a central stalk rotating inside the F(1) region and a stationary peripheral stalk. During catalysis, ATP synthesis in the catalytic domain of F(1) is coupled via a rotary mechanism of the central stalk subunits to proton translocation (By similarity). In vivo, can only synthesize ATP although its ATP hydrolase activity can be activated artificially in vitro (By similarity). Part of the complex F(0) domain (By similarity).</text>
</comment>
<comment type="subunit">
    <text evidence="1">Component of the ATP synthase complex composed at least of ATP5F1A/subunit alpha, ATP5F1B/subunit beta, ATP5MC1/subunit c (homooctomer), MT-ATP6/subunit a, MT-ATP8/subunit 8, ATP5ME/subunit e, ATP5MF/subunit f, ATP5MG/subunit g, ATP5MK/subunit k, ATP5MJ/subunit j, ATP5F1C/subunit gamma, ATP5F1D/subunit delta, ATP5F1E/subunit epsilon, ATP5PF/subunit F6, ATP5PB/subunit b, ATP5PD/subunit d, ATP5PO/subunit OSCP. ATP synthase complex consists of a soluble F(1) head domain (subunits alpha(3) and beta(3)) - the catalytic core - and a membrane F(0) domain - the membrane proton channel (subunits c, a, 8, e, f, g, k and j). These two domains are linked by a central stalk (subunits gamma, delta, and epsilon) rotating inside the F1 region and a stationary peripheral stalk (subunits F6, b, d, and OSCP). Interacts with PRICKLE3.</text>
</comment>
<comment type="subcellular location">
    <subcellularLocation>
        <location>Mitochondrion membrane</location>
        <topology>Single-pass membrane protein</topology>
    </subcellularLocation>
</comment>
<comment type="similarity">
    <text evidence="5">Belongs to the ATPase protein 8 family.</text>
</comment>
<evidence type="ECO:0000250" key="1">
    <source>
        <dbReference type="UniProtKB" id="P03928"/>
    </source>
</evidence>
<evidence type="ECO:0000250" key="2">
    <source>
        <dbReference type="UniProtKB" id="P03930"/>
    </source>
</evidence>
<evidence type="ECO:0000250" key="3">
    <source>
        <dbReference type="UniProtKB" id="P19483"/>
    </source>
</evidence>
<evidence type="ECO:0000255" key="4"/>
<evidence type="ECO:0000305" key="5"/>
<accession>Q9MQK2</accession>
<gene>
    <name evidence="1" type="primary">MT-ATP8</name>
    <name type="synonym">ATP8</name>
    <name type="synonym">ATPASE8</name>
    <name type="synonym">MTATP8</name>
</gene>